<protein>
    <recommendedName>
        <fullName evidence="1">Adenylosuccinate synthetase</fullName>
        <shortName evidence="1">AMPSase</shortName>
        <shortName evidence="1">AdSS</shortName>
        <ecNumber evidence="1">6.3.4.4</ecNumber>
    </recommendedName>
    <alternativeName>
        <fullName evidence="1">IMP--aspartate ligase</fullName>
    </alternativeName>
</protein>
<sequence length="428" mass="47207">MSAFIVLGAQWGDEGKGKMTDYLAEEANVVVRFQGGNNAGHTVVVGDKEYKLRLIPSGILYEDKLNVIGNGVVVDPKALFEEIEYLEGVGVKISPEKLIVSDRAQLIMPYHKVLDKLKEKARGKNDIGTTGRGIGPCYTDKFERCGIRVCDLLHEDVFIEKLRENVEMKNAYITKVLGGEALNFDEILDEYLGFAKKLRPFVQDTSVKVYDAIKADKTVLFEGAQGMLLDIDYGTYPYVTSSNTTAGGVSSGSGIGPNMITNAVGITKAYTTRVGKGPFPTELLGETGDWIREKGHEYGVNTGRSRRCGWLDLVIIKTAVRVSGLTSLAVTKIDTLAGLEKIKVCVGYKFNDTVIDYFPASLEDLAECEPIYEEFDGWDDSVADVRSYDELPENVKKYLARISEFTGTRISIVGVGPKRDQTMRIDNL</sequence>
<keyword id="KW-0963">Cytoplasm</keyword>
<keyword id="KW-0342">GTP-binding</keyword>
<keyword id="KW-0436">Ligase</keyword>
<keyword id="KW-0460">Magnesium</keyword>
<keyword id="KW-0479">Metal-binding</keyword>
<keyword id="KW-0547">Nucleotide-binding</keyword>
<keyword id="KW-0658">Purine biosynthesis</keyword>
<feature type="chain" id="PRO_1000073941" description="Adenylosuccinate synthetase">
    <location>
        <begin position="1"/>
        <end position="428"/>
    </location>
</feature>
<feature type="active site" description="Proton acceptor" evidence="1">
    <location>
        <position position="13"/>
    </location>
</feature>
<feature type="active site" description="Proton donor" evidence="1">
    <location>
        <position position="41"/>
    </location>
</feature>
<feature type="binding site" evidence="1">
    <location>
        <begin position="12"/>
        <end position="18"/>
    </location>
    <ligand>
        <name>GTP</name>
        <dbReference type="ChEBI" id="CHEBI:37565"/>
    </ligand>
</feature>
<feature type="binding site" description="in other chain" evidence="1">
    <location>
        <begin position="13"/>
        <end position="16"/>
    </location>
    <ligand>
        <name>IMP</name>
        <dbReference type="ChEBI" id="CHEBI:58053"/>
        <note>ligand shared between dimeric partners</note>
    </ligand>
</feature>
<feature type="binding site" evidence="1">
    <location>
        <position position="13"/>
    </location>
    <ligand>
        <name>Mg(2+)</name>
        <dbReference type="ChEBI" id="CHEBI:18420"/>
    </ligand>
</feature>
<feature type="binding site" description="in other chain" evidence="1">
    <location>
        <begin position="38"/>
        <end position="41"/>
    </location>
    <ligand>
        <name>IMP</name>
        <dbReference type="ChEBI" id="CHEBI:58053"/>
        <note>ligand shared between dimeric partners</note>
    </ligand>
</feature>
<feature type="binding site" evidence="1">
    <location>
        <begin position="40"/>
        <end position="42"/>
    </location>
    <ligand>
        <name>GTP</name>
        <dbReference type="ChEBI" id="CHEBI:37565"/>
    </ligand>
</feature>
<feature type="binding site" evidence="1">
    <location>
        <position position="40"/>
    </location>
    <ligand>
        <name>Mg(2+)</name>
        <dbReference type="ChEBI" id="CHEBI:18420"/>
    </ligand>
</feature>
<feature type="binding site" description="in other chain" evidence="1">
    <location>
        <position position="130"/>
    </location>
    <ligand>
        <name>IMP</name>
        <dbReference type="ChEBI" id="CHEBI:58053"/>
        <note>ligand shared between dimeric partners</note>
    </ligand>
</feature>
<feature type="binding site" evidence="1">
    <location>
        <position position="144"/>
    </location>
    <ligand>
        <name>IMP</name>
        <dbReference type="ChEBI" id="CHEBI:58053"/>
        <note>ligand shared between dimeric partners</note>
    </ligand>
</feature>
<feature type="binding site" description="in other chain" evidence="1">
    <location>
        <position position="225"/>
    </location>
    <ligand>
        <name>IMP</name>
        <dbReference type="ChEBI" id="CHEBI:58053"/>
        <note>ligand shared between dimeric partners</note>
    </ligand>
</feature>
<feature type="binding site" description="in other chain" evidence="1">
    <location>
        <position position="240"/>
    </location>
    <ligand>
        <name>IMP</name>
        <dbReference type="ChEBI" id="CHEBI:58053"/>
        <note>ligand shared between dimeric partners</note>
    </ligand>
</feature>
<feature type="binding site" evidence="1">
    <location>
        <begin position="300"/>
        <end position="306"/>
    </location>
    <ligand>
        <name>substrate</name>
    </ligand>
</feature>
<feature type="binding site" description="in other chain" evidence="1">
    <location>
        <position position="304"/>
    </location>
    <ligand>
        <name>IMP</name>
        <dbReference type="ChEBI" id="CHEBI:58053"/>
        <note>ligand shared between dimeric partners</note>
    </ligand>
</feature>
<feature type="binding site" evidence="1">
    <location>
        <position position="306"/>
    </location>
    <ligand>
        <name>GTP</name>
        <dbReference type="ChEBI" id="CHEBI:37565"/>
    </ligand>
</feature>
<feature type="binding site" evidence="1">
    <location>
        <begin position="332"/>
        <end position="334"/>
    </location>
    <ligand>
        <name>GTP</name>
        <dbReference type="ChEBI" id="CHEBI:37565"/>
    </ligand>
</feature>
<feature type="binding site" evidence="1">
    <location>
        <begin position="414"/>
        <end position="416"/>
    </location>
    <ligand>
        <name>GTP</name>
        <dbReference type="ChEBI" id="CHEBI:37565"/>
    </ligand>
</feature>
<comment type="function">
    <text evidence="1">Plays an important role in the de novo pathway of purine nucleotide biosynthesis. Catalyzes the first committed step in the biosynthesis of AMP from IMP.</text>
</comment>
<comment type="catalytic activity">
    <reaction evidence="1">
        <text>IMP + L-aspartate + GTP = N(6)-(1,2-dicarboxyethyl)-AMP + GDP + phosphate + 2 H(+)</text>
        <dbReference type="Rhea" id="RHEA:15753"/>
        <dbReference type="ChEBI" id="CHEBI:15378"/>
        <dbReference type="ChEBI" id="CHEBI:29991"/>
        <dbReference type="ChEBI" id="CHEBI:37565"/>
        <dbReference type="ChEBI" id="CHEBI:43474"/>
        <dbReference type="ChEBI" id="CHEBI:57567"/>
        <dbReference type="ChEBI" id="CHEBI:58053"/>
        <dbReference type="ChEBI" id="CHEBI:58189"/>
        <dbReference type="EC" id="6.3.4.4"/>
    </reaction>
</comment>
<comment type="cofactor">
    <cofactor evidence="1">
        <name>Mg(2+)</name>
        <dbReference type="ChEBI" id="CHEBI:18420"/>
    </cofactor>
    <text evidence="1">Binds 1 Mg(2+) ion per subunit.</text>
</comment>
<comment type="pathway">
    <text evidence="1">Purine metabolism; AMP biosynthesis via de novo pathway; AMP from IMP: step 1/2.</text>
</comment>
<comment type="subunit">
    <text evidence="1">Homodimer.</text>
</comment>
<comment type="subcellular location">
    <subcellularLocation>
        <location evidence="1">Cytoplasm</location>
    </subcellularLocation>
</comment>
<comment type="similarity">
    <text evidence="1">Belongs to the adenylosuccinate synthetase family.</text>
</comment>
<gene>
    <name evidence="1" type="primary">purA</name>
    <name type="ordered locus">Cbei_5074</name>
</gene>
<evidence type="ECO:0000255" key="1">
    <source>
        <dbReference type="HAMAP-Rule" id="MF_00011"/>
    </source>
</evidence>
<organism>
    <name type="scientific">Clostridium beijerinckii (strain ATCC 51743 / NCIMB 8052)</name>
    <name type="common">Clostridium acetobutylicum</name>
    <dbReference type="NCBI Taxonomy" id="290402"/>
    <lineage>
        <taxon>Bacteria</taxon>
        <taxon>Bacillati</taxon>
        <taxon>Bacillota</taxon>
        <taxon>Clostridia</taxon>
        <taxon>Eubacteriales</taxon>
        <taxon>Clostridiaceae</taxon>
        <taxon>Clostridium</taxon>
    </lineage>
</organism>
<proteinExistence type="inferred from homology"/>
<dbReference type="EC" id="6.3.4.4" evidence="1"/>
<dbReference type="EMBL" id="CP000721">
    <property type="protein sequence ID" value="ABR37180.1"/>
    <property type="molecule type" value="Genomic_DNA"/>
</dbReference>
<dbReference type="RefSeq" id="WP_012061223.1">
    <property type="nucleotide sequence ID" value="NC_009617.1"/>
</dbReference>
<dbReference type="SMR" id="A6M3K0"/>
<dbReference type="KEGG" id="cbe:Cbei_5074"/>
<dbReference type="eggNOG" id="COG0104">
    <property type="taxonomic scope" value="Bacteria"/>
</dbReference>
<dbReference type="HOGENOM" id="CLU_029848_0_0_9"/>
<dbReference type="UniPathway" id="UPA00075">
    <property type="reaction ID" value="UER00335"/>
</dbReference>
<dbReference type="Proteomes" id="UP000000565">
    <property type="component" value="Chromosome"/>
</dbReference>
<dbReference type="GO" id="GO:0005737">
    <property type="term" value="C:cytoplasm"/>
    <property type="evidence" value="ECO:0007669"/>
    <property type="project" value="UniProtKB-SubCell"/>
</dbReference>
<dbReference type="GO" id="GO:0004019">
    <property type="term" value="F:adenylosuccinate synthase activity"/>
    <property type="evidence" value="ECO:0007669"/>
    <property type="project" value="UniProtKB-UniRule"/>
</dbReference>
<dbReference type="GO" id="GO:0005525">
    <property type="term" value="F:GTP binding"/>
    <property type="evidence" value="ECO:0007669"/>
    <property type="project" value="UniProtKB-UniRule"/>
</dbReference>
<dbReference type="GO" id="GO:0000287">
    <property type="term" value="F:magnesium ion binding"/>
    <property type="evidence" value="ECO:0007669"/>
    <property type="project" value="UniProtKB-UniRule"/>
</dbReference>
<dbReference type="GO" id="GO:0044208">
    <property type="term" value="P:'de novo' AMP biosynthetic process"/>
    <property type="evidence" value="ECO:0007669"/>
    <property type="project" value="UniProtKB-UniRule"/>
</dbReference>
<dbReference type="GO" id="GO:0046040">
    <property type="term" value="P:IMP metabolic process"/>
    <property type="evidence" value="ECO:0007669"/>
    <property type="project" value="TreeGrafter"/>
</dbReference>
<dbReference type="CDD" id="cd03108">
    <property type="entry name" value="AdSS"/>
    <property type="match status" value="1"/>
</dbReference>
<dbReference type="FunFam" id="1.10.300.10:FF:000001">
    <property type="entry name" value="Adenylosuccinate synthetase"/>
    <property type="match status" value="1"/>
</dbReference>
<dbReference type="FunFam" id="3.90.170.10:FF:000001">
    <property type="entry name" value="Adenylosuccinate synthetase"/>
    <property type="match status" value="1"/>
</dbReference>
<dbReference type="Gene3D" id="3.40.440.10">
    <property type="entry name" value="Adenylosuccinate Synthetase, subunit A, domain 1"/>
    <property type="match status" value="1"/>
</dbReference>
<dbReference type="Gene3D" id="1.10.300.10">
    <property type="entry name" value="Adenylosuccinate Synthetase, subunit A, domain 2"/>
    <property type="match status" value="1"/>
</dbReference>
<dbReference type="Gene3D" id="3.90.170.10">
    <property type="entry name" value="Adenylosuccinate Synthetase, subunit A, domain 3"/>
    <property type="match status" value="1"/>
</dbReference>
<dbReference type="HAMAP" id="MF_00011">
    <property type="entry name" value="Adenylosucc_synth"/>
    <property type="match status" value="1"/>
</dbReference>
<dbReference type="InterPro" id="IPR018220">
    <property type="entry name" value="Adenylosuccin_syn_GTP-bd"/>
</dbReference>
<dbReference type="InterPro" id="IPR033128">
    <property type="entry name" value="Adenylosuccin_syn_Lys_AS"/>
</dbReference>
<dbReference type="InterPro" id="IPR042109">
    <property type="entry name" value="Adenylosuccinate_synth_dom1"/>
</dbReference>
<dbReference type="InterPro" id="IPR042110">
    <property type="entry name" value="Adenylosuccinate_synth_dom2"/>
</dbReference>
<dbReference type="InterPro" id="IPR042111">
    <property type="entry name" value="Adenylosuccinate_synth_dom3"/>
</dbReference>
<dbReference type="InterPro" id="IPR001114">
    <property type="entry name" value="Adenylosuccinate_synthetase"/>
</dbReference>
<dbReference type="InterPro" id="IPR027417">
    <property type="entry name" value="P-loop_NTPase"/>
</dbReference>
<dbReference type="NCBIfam" id="NF002223">
    <property type="entry name" value="PRK01117.1"/>
    <property type="match status" value="1"/>
</dbReference>
<dbReference type="NCBIfam" id="TIGR00184">
    <property type="entry name" value="purA"/>
    <property type="match status" value="1"/>
</dbReference>
<dbReference type="PANTHER" id="PTHR11846">
    <property type="entry name" value="ADENYLOSUCCINATE SYNTHETASE"/>
    <property type="match status" value="1"/>
</dbReference>
<dbReference type="PANTHER" id="PTHR11846:SF0">
    <property type="entry name" value="ADENYLOSUCCINATE SYNTHETASE"/>
    <property type="match status" value="1"/>
</dbReference>
<dbReference type="Pfam" id="PF00709">
    <property type="entry name" value="Adenylsucc_synt"/>
    <property type="match status" value="1"/>
</dbReference>
<dbReference type="SMART" id="SM00788">
    <property type="entry name" value="Adenylsucc_synt"/>
    <property type="match status" value="1"/>
</dbReference>
<dbReference type="SUPFAM" id="SSF52540">
    <property type="entry name" value="P-loop containing nucleoside triphosphate hydrolases"/>
    <property type="match status" value="1"/>
</dbReference>
<dbReference type="PROSITE" id="PS01266">
    <property type="entry name" value="ADENYLOSUCCIN_SYN_1"/>
    <property type="match status" value="1"/>
</dbReference>
<dbReference type="PROSITE" id="PS00513">
    <property type="entry name" value="ADENYLOSUCCIN_SYN_2"/>
    <property type="match status" value="1"/>
</dbReference>
<reference key="1">
    <citation type="submission" date="2007-06" db="EMBL/GenBank/DDBJ databases">
        <title>Complete sequence of Clostridium beijerinckii NCIMB 8052.</title>
        <authorList>
            <consortium name="US DOE Joint Genome Institute"/>
            <person name="Copeland A."/>
            <person name="Lucas S."/>
            <person name="Lapidus A."/>
            <person name="Barry K."/>
            <person name="Detter J.C."/>
            <person name="Glavina del Rio T."/>
            <person name="Hammon N."/>
            <person name="Israni S."/>
            <person name="Dalin E."/>
            <person name="Tice H."/>
            <person name="Pitluck S."/>
            <person name="Sims D."/>
            <person name="Brettin T."/>
            <person name="Bruce D."/>
            <person name="Tapia R."/>
            <person name="Brainard J."/>
            <person name="Schmutz J."/>
            <person name="Larimer F."/>
            <person name="Land M."/>
            <person name="Hauser L."/>
            <person name="Kyrpides N."/>
            <person name="Mikhailova N."/>
            <person name="Bennet G."/>
            <person name="Cann I."/>
            <person name="Chen J.-S."/>
            <person name="Contreras A.L."/>
            <person name="Jones D."/>
            <person name="Kashket E."/>
            <person name="Mitchell W."/>
            <person name="Stoddard S."/>
            <person name="Schwarz W."/>
            <person name="Qureshi N."/>
            <person name="Young M."/>
            <person name="Shi Z."/>
            <person name="Ezeji T."/>
            <person name="White B."/>
            <person name="Blaschek H."/>
            <person name="Richardson P."/>
        </authorList>
    </citation>
    <scope>NUCLEOTIDE SEQUENCE [LARGE SCALE GENOMIC DNA]</scope>
    <source>
        <strain>ATCC 51743 / NCIMB 8052</strain>
    </source>
</reference>
<name>PURA_CLOB8</name>
<accession>A6M3K0</accession>